<keyword id="KW-0106">Calcium</keyword>
<keyword id="KW-0255">Endonuclease</keyword>
<keyword id="KW-0378">Hydrolase</keyword>
<keyword id="KW-0472">Membrane</keyword>
<keyword id="KW-0479">Metal-binding</keyword>
<keyword id="KW-0496">Mitochondrion</keyword>
<keyword id="KW-0540">Nuclease</keyword>
<keyword id="KW-1185">Reference proteome</keyword>
<keyword id="KW-0812">Transmembrane</keyword>
<keyword id="KW-1133">Transmembrane helix</keyword>
<reference key="1">
    <citation type="journal article" date="2005" name="Nature">
        <title>Sequencing of Aspergillus nidulans and comparative analysis with A. fumigatus and A. oryzae.</title>
        <authorList>
            <person name="Galagan J.E."/>
            <person name="Calvo S.E."/>
            <person name="Cuomo C."/>
            <person name="Ma L.-J."/>
            <person name="Wortman J.R."/>
            <person name="Batzoglou S."/>
            <person name="Lee S.-I."/>
            <person name="Bastuerkmen M."/>
            <person name="Spevak C.C."/>
            <person name="Clutterbuck J."/>
            <person name="Kapitonov V."/>
            <person name="Jurka J."/>
            <person name="Scazzocchio C."/>
            <person name="Farman M.L."/>
            <person name="Butler J."/>
            <person name="Purcell S."/>
            <person name="Harris S."/>
            <person name="Braus G.H."/>
            <person name="Draht O."/>
            <person name="Busch S."/>
            <person name="D'Enfert C."/>
            <person name="Bouchier C."/>
            <person name="Goldman G.H."/>
            <person name="Bell-Pedersen D."/>
            <person name="Griffiths-Jones S."/>
            <person name="Doonan J.H."/>
            <person name="Yu J."/>
            <person name="Vienken K."/>
            <person name="Pain A."/>
            <person name="Freitag M."/>
            <person name="Selker E.U."/>
            <person name="Archer D.B."/>
            <person name="Penalva M.A."/>
            <person name="Oakley B.R."/>
            <person name="Momany M."/>
            <person name="Tanaka T."/>
            <person name="Kumagai T."/>
            <person name="Asai K."/>
            <person name="Machida M."/>
            <person name="Nierman W.C."/>
            <person name="Denning D.W."/>
            <person name="Caddick M.X."/>
            <person name="Hynes M."/>
            <person name="Paoletti M."/>
            <person name="Fischer R."/>
            <person name="Miller B.L."/>
            <person name="Dyer P.S."/>
            <person name="Sachs M.S."/>
            <person name="Osmani S.A."/>
            <person name="Birren B.W."/>
        </authorList>
    </citation>
    <scope>NUCLEOTIDE SEQUENCE [LARGE SCALE GENOMIC DNA]</scope>
    <source>
        <strain>FGSC A4 / ATCC 38163 / CBS 112.46 / NRRL 194 / M139</strain>
    </source>
</reference>
<reference key="2">
    <citation type="journal article" date="2009" name="Fungal Genet. Biol.">
        <title>The 2008 update of the Aspergillus nidulans genome annotation: a community effort.</title>
        <authorList>
            <person name="Wortman J.R."/>
            <person name="Gilsenan J.M."/>
            <person name="Joardar V."/>
            <person name="Deegan J."/>
            <person name="Clutterbuck J."/>
            <person name="Andersen M.R."/>
            <person name="Archer D."/>
            <person name="Bencina M."/>
            <person name="Braus G."/>
            <person name="Coutinho P."/>
            <person name="von Dohren H."/>
            <person name="Doonan J."/>
            <person name="Driessen A.J."/>
            <person name="Durek P."/>
            <person name="Espeso E."/>
            <person name="Fekete E."/>
            <person name="Flipphi M."/>
            <person name="Estrada C.G."/>
            <person name="Geysens S."/>
            <person name="Goldman G."/>
            <person name="de Groot P.W."/>
            <person name="Hansen K."/>
            <person name="Harris S.D."/>
            <person name="Heinekamp T."/>
            <person name="Helmstaedt K."/>
            <person name="Henrissat B."/>
            <person name="Hofmann G."/>
            <person name="Homan T."/>
            <person name="Horio T."/>
            <person name="Horiuchi H."/>
            <person name="James S."/>
            <person name="Jones M."/>
            <person name="Karaffa L."/>
            <person name="Karanyi Z."/>
            <person name="Kato M."/>
            <person name="Keller N."/>
            <person name="Kelly D.E."/>
            <person name="Kiel J.A."/>
            <person name="Kim J.M."/>
            <person name="van der Klei I.J."/>
            <person name="Klis F.M."/>
            <person name="Kovalchuk A."/>
            <person name="Krasevec N."/>
            <person name="Kubicek C.P."/>
            <person name="Liu B."/>
            <person name="Maccabe A."/>
            <person name="Meyer V."/>
            <person name="Mirabito P."/>
            <person name="Miskei M."/>
            <person name="Mos M."/>
            <person name="Mullins J."/>
            <person name="Nelson D.R."/>
            <person name="Nielsen J."/>
            <person name="Oakley B.R."/>
            <person name="Osmani S.A."/>
            <person name="Pakula T."/>
            <person name="Paszewski A."/>
            <person name="Paulsen I."/>
            <person name="Pilsyk S."/>
            <person name="Pocsi I."/>
            <person name="Punt P.J."/>
            <person name="Ram A.F."/>
            <person name="Ren Q."/>
            <person name="Robellet X."/>
            <person name="Robson G."/>
            <person name="Seiboth B."/>
            <person name="van Solingen P."/>
            <person name="Specht T."/>
            <person name="Sun J."/>
            <person name="Taheri-Talesh N."/>
            <person name="Takeshita N."/>
            <person name="Ussery D."/>
            <person name="vanKuyk P.A."/>
            <person name="Visser H."/>
            <person name="van de Vondervoort P.J."/>
            <person name="de Vries R.P."/>
            <person name="Walton J."/>
            <person name="Xiang X."/>
            <person name="Xiong Y."/>
            <person name="Zeng A.P."/>
            <person name="Brandt B.W."/>
            <person name="Cornell M.J."/>
            <person name="van den Hondel C.A."/>
            <person name="Visser J."/>
            <person name="Oliver S.G."/>
            <person name="Turner G."/>
        </authorList>
    </citation>
    <scope>GENOME REANNOTATION</scope>
    <source>
        <strain>FGSC A4 / ATCC 38163 / CBS 112.46 / NRRL 194 / M139</strain>
    </source>
</reference>
<gene>
    <name type="primary">lcl3</name>
    <name type="ORF">AN0258</name>
</gene>
<dbReference type="EC" id="3.1.-.-"/>
<dbReference type="EMBL" id="AACD01000005">
    <property type="protein sequence ID" value="EAA66131.1"/>
    <property type="molecule type" value="Genomic_DNA"/>
</dbReference>
<dbReference type="EMBL" id="BN001308">
    <property type="protein sequence ID" value="CBF89865.1"/>
    <property type="molecule type" value="Genomic_DNA"/>
</dbReference>
<dbReference type="RefSeq" id="XP_657862.1">
    <property type="nucleotide sequence ID" value="XM_652770.1"/>
</dbReference>
<dbReference type="FunCoup" id="Q5BGS2">
    <property type="interactions" value="15"/>
</dbReference>
<dbReference type="EnsemblFungi" id="CBF89865">
    <property type="protein sequence ID" value="CBF89865"/>
    <property type="gene ID" value="ANIA_00258"/>
</dbReference>
<dbReference type="KEGG" id="ani:ANIA_00258"/>
<dbReference type="VEuPathDB" id="FungiDB:AN0258"/>
<dbReference type="eggNOG" id="ENOG502RZZQ">
    <property type="taxonomic scope" value="Eukaryota"/>
</dbReference>
<dbReference type="HOGENOM" id="CLU_046484_0_1_1"/>
<dbReference type="InParanoid" id="Q5BGS2"/>
<dbReference type="OMA" id="IYHTPGG"/>
<dbReference type="OrthoDB" id="430293at2759"/>
<dbReference type="Proteomes" id="UP000000560">
    <property type="component" value="Chromosome VIII"/>
</dbReference>
<dbReference type="GO" id="GO:0016020">
    <property type="term" value="C:membrane"/>
    <property type="evidence" value="ECO:0007669"/>
    <property type="project" value="UniProtKB-SubCell"/>
</dbReference>
<dbReference type="GO" id="GO:0005739">
    <property type="term" value="C:mitochondrion"/>
    <property type="evidence" value="ECO:0007669"/>
    <property type="project" value="UniProtKB-SubCell"/>
</dbReference>
<dbReference type="GO" id="GO:0004519">
    <property type="term" value="F:endonuclease activity"/>
    <property type="evidence" value="ECO:0007669"/>
    <property type="project" value="UniProtKB-KW"/>
</dbReference>
<dbReference type="GO" id="GO:0046872">
    <property type="term" value="F:metal ion binding"/>
    <property type="evidence" value="ECO:0007669"/>
    <property type="project" value="UniProtKB-KW"/>
</dbReference>
<dbReference type="FunFam" id="2.40.50.90:FF:000029">
    <property type="entry name" value="Probable endonuclease lcl3"/>
    <property type="match status" value="1"/>
</dbReference>
<dbReference type="Gene3D" id="2.40.50.90">
    <property type="match status" value="1"/>
</dbReference>
<dbReference type="InterPro" id="IPR035437">
    <property type="entry name" value="SNase_OB-fold_sf"/>
</dbReference>
<dbReference type="InterPro" id="IPR016071">
    <property type="entry name" value="Staphylococal_nuclease_OB-fold"/>
</dbReference>
<dbReference type="PANTHER" id="PTHR12302">
    <property type="entry name" value="EBNA2 BINDING PROTEIN P100"/>
    <property type="match status" value="1"/>
</dbReference>
<dbReference type="PANTHER" id="PTHR12302:SF3">
    <property type="entry name" value="SERINE_THREONINE-PROTEIN KINASE 31"/>
    <property type="match status" value="1"/>
</dbReference>
<dbReference type="Pfam" id="PF00565">
    <property type="entry name" value="SNase"/>
    <property type="match status" value="1"/>
</dbReference>
<dbReference type="SMART" id="SM00318">
    <property type="entry name" value="SNc"/>
    <property type="match status" value="1"/>
</dbReference>
<dbReference type="SUPFAM" id="SSF50199">
    <property type="entry name" value="Staphylococcal nuclease"/>
    <property type="match status" value="1"/>
</dbReference>
<dbReference type="PROSITE" id="PS50830">
    <property type="entry name" value="TNASE_3"/>
    <property type="match status" value="1"/>
</dbReference>
<sequence>MRWPPWSSKTQEPTIADDKQQNCTSLLPVTTNQTDKAAILDWAAFTELRTLIPTLILTTAILSAARFHRSYLRRFPDAPSIDAAYFRRRSIYGKVTSVGDGDNFRIFHTPGGRLAGWELLPWKRIPKGKKELRDNTIHVRLAGIDAPELAHFGRPEQPYAREAHEWLTSYLLSRRVRAYLHRPDQYQRVVATVYVRRVLDFPIPFRRRDVSYEMLRRGLATVYEAKSGAEFGGDAIEAKYRNAEWWAKLKGNGMWKGFRRNKEFESPREYKTRVGLEEKK</sequence>
<feature type="chain" id="PRO_0000408660" description="Probable endonuclease lcl3">
    <location>
        <begin position="1"/>
        <end position="280"/>
    </location>
</feature>
<feature type="transmembrane region" description="Helical" evidence="2">
    <location>
        <begin position="50"/>
        <end position="67"/>
    </location>
</feature>
<feature type="domain" description="TNase-like" evidence="3">
    <location>
        <begin position="89"/>
        <end position="257"/>
    </location>
</feature>
<feature type="active site" evidence="3">
    <location>
        <position position="140"/>
    </location>
</feature>
<feature type="active site" evidence="3">
    <location>
        <position position="148"/>
    </location>
</feature>
<feature type="active site" evidence="3">
    <location>
        <position position="188"/>
    </location>
</feature>
<feature type="binding site" evidence="3">
    <location>
        <position position="145"/>
    </location>
    <ligand>
        <name>Ca(2+)</name>
        <dbReference type="ChEBI" id="CHEBI:29108"/>
    </ligand>
</feature>
<proteinExistence type="inferred from homology"/>
<organism>
    <name type="scientific">Emericella nidulans (strain FGSC A4 / ATCC 38163 / CBS 112.46 / NRRL 194 / M139)</name>
    <name type="common">Aspergillus nidulans</name>
    <dbReference type="NCBI Taxonomy" id="227321"/>
    <lineage>
        <taxon>Eukaryota</taxon>
        <taxon>Fungi</taxon>
        <taxon>Dikarya</taxon>
        <taxon>Ascomycota</taxon>
        <taxon>Pezizomycotina</taxon>
        <taxon>Eurotiomycetes</taxon>
        <taxon>Eurotiomycetidae</taxon>
        <taxon>Eurotiales</taxon>
        <taxon>Aspergillaceae</taxon>
        <taxon>Aspergillus</taxon>
        <taxon>Aspergillus subgen. Nidulantes</taxon>
    </lineage>
</organism>
<evidence type="ECO:0000250" key="1"/>
<evidence type="ECO:0000255" key="2"/>
<evidence type="ECO:0000255" key="3">
    <source>
        <dbReference type="PROSITE-ProRule" id="PRU00272"/>
    </source>
</evidence>
<evidence type="ECO:0000305" key="4"/>
<name>LCL3_EMENI</name>
<accession>Q5BGS2</accession>
<accession>C8VUJ6</accession>
<comment type="subcellular location">
    <subcellularLocation>
        <location>Mitochondrion</location>
    </subcellularLocation>
    <subcellularLocation>
        <location evidence="1">Membrane</location>
        <topology evidence="1">Single-pass membrane protein</topology>
    </subcellularLocation>
</comment>
<comment type="similarity">
    <text evidence="4">Belongs to the LCL3 family.</text>
</comment>
<protein>
    <recommendedName>
        <fullName>Probable endonuclease lcl3</fullName>
        <ecNumber>3.1.-.-</ecNumber>
    </recommendedName>
</protein>